<proteinExistence type="inferred from homology"/>
<name>RBFA_SODGM</name>
<keyword id="KW-0963">Cytoplasm</keyword>
<keyword id="KW-0690">Ribosome biogenesis</keyword>
<evidence type="ECO:0000255" key="1">
    <source>
        <dbReference type="HAMAP-Rule" id="MF_00003"/>
    </source>
</evidence>
<reference key="1">
    <citation type="journal article" date="2006" name="Genome Res.">
        <title>Massive genome erosion and functional adaptations provide insights into the symbiotic lifestyle of Sodalis glossinidius in the tsetse host.</title>
        <authorList>
            <person name="Toh H."/>
            <person name="Weiss B.L."/>
            <person name="Perkin S.A.H."/>
            <person name="Yamashita A."/>
            <person name="Oshima K."/>
            <person name="Hattori M."/>
            <person name="Aksoy S."/>
        </authorList>
    </citation>
    <scope>NUCLEOTIDE SEQUENCE [LARGE SCALE GENOMIC DNA]</scope>
    <source>
        <strain>morsitans</strain>
    </source>
</reference>
<dbReference type="EMBL" id="AP008232">
    <property type="protein sequence ID" value="BAE73653.1"/>
    <property type="molecule type" value="Genomic_DNA"/>
</dbReference>
<dbReference type="RefSeq" id="WP_011410241.1">
    <property type="nucleotide sequence ID" value="NC_007712.1"/>
</dbReference>
<dbReference type="SMR" id="Q2NW22"/>
<dbReference type="STRING" id="343509.SG0378"/>
<dbReference type="KEGG" id="sgl:SG0378"/>
<dbReference type="eggNOG" id="COG0858">
    <property type="taxonomic scope" value="Bacteria"/>
</dbReference>
<dbReference type="HOGENOM" id="CLU_089475_5_0_6"/>
<dbReference type="OrthoDB" id="307788at2"/>
<dbReference type="BioCyc" id="SGLO343509:SGP1_RS03555-MONOMER"/>
<dbReference type="Proteomes" id="UP000001932">
    <property type="component" value="Chromosome"/>
</dbReference>
<dbReference type="GO" id="GO:0005829">
    <property type="term" value="C:cytosol"/>
    <property type="evidence" value="ECO:0007669"/>
    <property type="project" value="TreeGrafter"/>
</dbReference>
<dbReference type="GO" id="GO:0043024">
    <property type="term" value="F:ribosomal small subunit binding"/>
    <property type="evidence" value="ECO:0007669"/>
    <property type="project" value="TreeGrafter"/>
</dbReference>
<dbReference type="GO" id="GO:0030490">
    <property type="term" value="P:maturation of SSU-rRNA"/>
    <property type="evidence" value="ECO:0007669"/>
    <property type="project" value="UniProtKB-UniRule"/>
</dbReference>
<dbReference type="FunFam" id="3.30.300.20:FF:000007">
    <property type="entry name" value="Ribosome-binding factor A"/>
    <property type="match status" value="1"/>
</dbReference>
<dbReference type="Gene3D" id="3.30.300.20">
    <property type="match status" value="1"/>
</dbReference>
<dbReference type="HAMAP" id="MF_00003">
    <property type="entry name" value="RbfA"/>
    <property type="match status" value="1"/>
</dbReference>
<dbReference type="InterPro" id="IPR015946">
    <property type="entry name" value="KH_dom-like_a/b"/>
</dbReference>
<dbReference type="InterPro" id="IPR000238">
    <property type="entry name" value="RbfA"/>
</dbReference>
<dbReference type="InterPro" id="IPR023799">
    <property type="entry name" value="RbfA_dom_sf"/>
</dbReference>
<dbReference type="InterPro" id="IPR020053">
    <property type="entry name" value="Ribosome-bd_factorA_CS"/>
</dbReference>
<dbReference type="NCBIfam" id="TIGR00082">
    <property type="entry name" value="rbfA"/>
    <property type="match status" value="1"/>
</dbReference>
<dbReference type="PANTHER" id="PTHR33515">
    <property type="entry name" value="RIBOSOME-BINDING FACTOR A, CHLOROPLASTIC-RELATED"/>
    <property type="match status" value="1"/>
</dbReference>
<dbReference type="PANTHER" id="PTHR33515:SF1">
    <property type="entry name" value="RIBOSOME-BINDING FACTOR A, CHLOROPLASTIC-RELATED"/>
    <property type="match status" value="1"/>
</dbReference>
<dbReference type="Pfam" id="PF02033">
    <property type="entry name" value="RBFA"/>
    <property type="match status" value="1"/>
</dbReference>
<dbReference type="SUPFAM" id="SSF89919">
    <property type="entry name" value="Ribosome-binding factor A, RbfA"/>
    <property type="match status" value="1"/>
</dbReference>
<dbReference type="PROSITE" id="PS01319">
    <property type="entry name" value="RBFA"/>
    <property type="match status" value="1"/>
</dbReference>
<gene>
    <name evidence="1" type="primary">rbfA</name>
    <name type="ordered locus">SG0378</name>
</gene>
<accession>Q2NW22</accession>
<comment type="function">
    <text evidence="1">One of several proteins that assist in the late maturation steps of the functional core of the 30S ribosomal subunit. Associates with free 30S ribosomal subunits (but not with 30S subunits that are part of 70S ribosomes or polysomes). Required for efficient processing of 16S rRNA. May interact with the 5'-terminal helix region of 16S rRNA.</text>
</comment>
<comment type="subunit">
    <text evidence="1">Monomer. Binds 30S ribosomal subunits, but not 50S ribosomal subunits or 70S ribosomes.</text>
</comment>
<comment type="subcellular location">
    <subcellularLocation>
        <location evidence="1">Cytoplasm</location>
    </subcellularLocation>
</comment>
<comment type="similarity">
    <text evidence="1">Belongs to the RbfA family.</text>
</comment>
<sequence length="138" mass="15602">MAKEYSRTQRVAQEMQKEIAIILQREIKDPRVGMATVSGVEVSRDLAYAKVFVTFLNDNTLEQVKTGVRALQDAAGFIHSLLGKAMRLRVVPELTFAYDNSLVEGMRMSNLVSQVVQNDRLRRSASPVDKTDREDKED</sequence>
<organism>
    <name type="scientific">Sodalis glossinidius (strain morsitans)</name>
    <dbReference type="NCBI Taxonomy" id="343509"/>
    <lineage>
        <taxon>Bacteria</taxon>
        <taxon>Pseudomonadati</taxon>
        <taxon>Pseudomonadota</taxon>
        <taxon>Gammaproteobacteria</taxon>
        <taxon>Enterobacterales</taxon>
        <taxon>Bruguierivoracaceae</taxon>
        <taxon>Sodalis</taxon>
    </lineage>
</organism>
<feature type="chain" id="PRO_1000000215" description="Ribosome-binding factor A">
    <location>
        <begin position="1"/>
        <end position="138"/>
    </location>
</feature>
<protein>
    <recommendedName>
        <fullName evidence="1">Ribosome-binding factor A</fullName>
    </recommendedName>
</protein>